<organism>
    <name type="scientific">Idiomarina loihiensis (strain ATCC BAA-735 / DSM 15497 / L2-TR)</name>
    <dbReference type="NCBI Taxonomy" id="283942"/>
    <lineage>
        <taxon>Bacteria</taxon>
        <taxon>Pseudomonadati</taxon>
        <taxon>Pseudomonadota</taxon>
        <taxon>Gammaproteobacteria</taxon>
        <taxon>Alteromonadales</taxon>
        <taxon>Idiomarinaceae</taxon>
        <taxon>Idiomarina</taxon>
    </lineage>
</organism>
<accession>Q5QYV9</accession>
<comment type="catalytic activity">
    <reaction evidence="1">
        <text>tRNA(Lys) + L-lysine + ATP = L-lysyl-tRNA(Lys) + AMP + diphosphate</text>
        <dbReference type="Rhea" id="RHEA:20792"/>
        <dbReference type="Rhea" id="RHEA-COMP:9696"/>
        <dbReference type="Rhea" id="RHEA-COMP:9697"/>
        <dbReference type="ChEBI" id="CHEBI:30616"/>
        <dbReference type="ChEBI" id="CHEBI:32551"/>
        <dbReference type="ChEBI" id="CHEBI:33019"/>
        <dbReference type="ChEBI" id="CHEBI:78442"/>
        <dbReference type="ChEBI" id="CHEBI:78529"/>
        <dbReference type="ChEBI" id="CHEBI:456215"/>
        <dbReference type="EC" id="6.1.1.6"/>
    </reaction>
</comment>
<comment type="cofactor">
    <cofactor evidence="1">
        <name>Mg(2+)</name>
        <dbReference type="ChEBI" id="CHEBI:18420"/>
    </cofactor>
    <text evidence="1">Binds 3 Mg(2+) ions per subunit.</text>
</comment>
<comment type="subunit">
    <text evidence="1">Homodimer.</text>
</comment>
<comment type="subcellular location">
    <subcellularLocation>
        <location evidence="1">Cytoplasm</location>
    </subcellularLocation>
</comment>
<comment type="similarity">
    <text evidence="1">Belongs to the class-II aminoacyl-tRNA synthetase family.</text>
</comment>
<proteinExistence type="inferred from homology"/>
<evidence type="ECO:0000255" key="1">
    <source>
        <dbReference type="HAMAP-Rule" id="MF_00252"/>
    </source>
</evidence>
<name>SYK_IDILO</name>
<dbReference type="EC" id="6.1.1.6" evidence="1"/>
<dbReference type="EMBL" id="AE017340">
    <property type="protein sequence ID" value="AAV81662.1"/>
    <property type="molecule type" value="Genomic_DNA"/>
</dbReference>
<dbReference type="RefSeq" id="WP_011234073.1">
    <property type="nucleotide sequence ID" value="NC_006512.1"/>
</dbReference>
<dbReference type="SMR" id="Q5QYV9"/>
<dbReference type="STRING" id="283942.IL0822"/>
<dbReference type="GeneID" id="41335977"/>
<dbReference type="KEGG" id="ilo:IL0822"/>
<dbReference type="eggNOG" id="COG1190">
    <property type="taxonomic scope" value="Bacteria"/>
</dbReference>
<dbReference type="HOGENOM" id="CLU_008255_6_0_6"/>
<dbReference type="OrthoDB" id="9802326at2"/>
<dbReference type="Proteomes" id="UP000001171">
    <property type="component" value="Chromosome"/>
</dbReference>
<dbReference type="GO" id="GO:0005829">
    <property type="term" value="C:cytosol"/>
    <property type="evidence" value="ECO:0007669"/>
    <property type="project" value="TreeGrafter"/>
</dbReference>
<dbReference type="GO" id="GO:0005524">
    <property type="term" value="F:ATP binding"/>
    <property type="evidence" value="ECO:0007669"/>
    <property type="project" value="UniProtKB-UniRule"/>
</dbReference>
<dbReference type="GO" id="GO:0004824">
    <property type="term" value="F:lysine-tRNA ligase activity"/>
    <property type="evidence" value="ECO:0007669"/>
    <property type="project" value="UniProtKB-UniRule"/>
</dbReference>
<dbReference type="GO" id="GO:0000287">
    <property type="term" value="F:magnesium ion binding"/>
    <property type="evidence" value="ECO:0007669"/>
    <property type="project" value="UniProtKB-UniRule"/>
</dbReference>
<dbReference type="GO" id="GO:0000049">
    <property type="term" value="F:tRNA binding"/>
    <property type="evidence" value="ECO:0007669"/>
    <property type="project" value="TreeGrafter"/>
</dbReference>
<dbReference type="GO" id="GO:0006430">
    <property type="term" value="P:lysyl-tRNA aminoacylation"/>
    <property type="evidence" value="ECO:0007669"/>
    <property type="project" value="UniProtKB-UniRule"/>
</dbReference>
<dbReference type="CDD" id="cd00775">
    <property type="entry name" value="LysRS_core"/>
    <property type="match status" value="1"/>
</dbReference>
<dbReference type="CDD" id="cd04322">
    <property type="entry name" value="LysRS_N"/>
    <property type="match status" value="1"/>
</dbReference>
<dbReference type="FunFam" id="2.40.50.140:FF:000024">
    <property type="entry name" value="Lysine--tRNA ligase"/>
    <property type="match status" value="1"/>
</dbReference>
<dbReference type="FunFam" id="3.30.930.10:FF:000001">
    <property type="entry name" value="Lysine--tRNA ligase"/>
    <property type="match status" value="1"/>
</dbReference>
<dbReference type="Gene3D" id="3.30.930.10">
    <property type="entry name" value="Bira Bifunctional Protein, Domain 2"/>
    <property type="match status" value="1"/>
</dbReference>
<dbReference type="Gene3D" id="2.40.50.140">
    <property type="entry name" value="Nucleic acid-binding proteins"/>
    <property type="match status" value="1"/>
</dbReference>
<dbReference type="HAMAP" id="MF_00252">
    <property type="entry name" value="Lys_tRNA_synth_class2"/>
    <property type="match status" value="1"/>
</dbReference>
<dbReference type="InterPro" id="IPR004364">
    <property type="entry name" value="Aa-tRNA-synt_II"/>
</dbReference>
<dbReference type="InterPro" id="IPR006195">
    <property type="entry name" value="aa-tRNA-synth_II"/>
</dbReference>
<dbReference type="InterPro" id="IPR045864">
    <property type="entry name" value="aa-tRNA-synth_II/BPL/LPL"/>
</dbReference>
<dbReference type="InterPro" id="IPR002313">
    <property type="entry name" value="Lys-tRNA-ligase_II"/>
</dbReference>
<dbReference type="InterPro" id="IPR034762">
    <property type="entry name" value="Lys-tRNA-ligase_II_bac/euk"/>
</dbReference>
<dbReference type="InterPro" id="IPR044136">
    <property type="entry name" value="Lys-tRNA-ligase_II_N"/>
</dbReference>
<dbReference type="InterPro" id="IPR018149">
    <property type="entry name" value="Lys-tRNA-synth_II_C"/>
</dbReference>
<dbReference type="InterPro" id="IPR012340">
    <property type="entry name" value="NA-bd_OB-fold"/>
</dbReference>
<dbReference type="InterPro" id="IPR004365">
    <property type="entry name" value="NA-bd_OB_tRNA"/>
</dbReference>
<dbReference type="NCBIfam" id="TIGR00499">
    <property type="entry name" value="lysS_bact"/>
    <property type="match status" value="1"/>
</dbReference>
<dbReference type="NCBIfam" id="NF001756">
    <property type="entry name" value="PRK00484.1"/>
    <property type="match status" value="1"/>
</dbReference>
<dbReference type="PANTHER" id="PTHR42918:SF15">
    <property type="entry name" value="LYSINE--TRNA LIGASE, CHLOROPLASTIC_MITOCHONDRIAL"/>
    <property type="match status" value="1"/>
</dbReference>
<dbReference type="PANTHER" id="PTHR42918">
    <property type="entry name" value="LYSYL-TRNA SYNTHETASE"/>
    <property type="match status" value="1"/>
</dbReference>
<dbReference type="Pfam" id="PF00152">
    <property type="entry name" value="tRNA-synt_2"/>
    <property type="match status" value="1"/>
</dbReference>
<dbReference type="Pfam" id="PF01336">
    <property type="entry name" value="tRNA_anti-codon"/>
    <property type="match status" value="1"/>
</dbReference>
<dbReference type="PIRSF" id="PIRSF039101">
    <property type="entry name" value="LysRS2"/>
    <property type="match status" value="1"/>
</dbReference>
<dbReference type="PRINTS" id="PR00982">
    <property type="entry name" value="TRNASYNTHLYS"/>
</dbReference>
<dbReference type="SUPFAM" id="SSF55681">
    <property type="entry name" value="Class II aaRS and biotin synthetases"/>
    <property type="match status" value="1"/>
</dbReference>
<dbReference type="SUPFAM" id="SSF50249">
    <property type="entry name" value="Nucleic acid-binding proteins"/>
    <property type="match status" value="1"/>
</dbReference>
<dbReference type="PROSITE" id="PS50862">
    <property type="entry name" value="AA_TRNA_LIGASE_II"/>
    <property type="match status" value="1"/>
</dbReference>
<gene>
    <name evidence="1" type="primary">lysS</name>
    <name type="ordered locus">IL0822</name>
</gene>
<feature type="chain" id="PRO_1000078502" description="Lysine--tRNA ligase">
    <location>
        <begin position="1"/>
        <end position="503"/>
    </location>
</feature>
<feature type="binding site" evidence="1">
    <location>
        <position position="412"/>
    </location>
    <ligand>
        <name>Mg(2+)</name>
        <dbReference type="ChEBI" id="CHEBI:18420"/>
        <label>1</label>
    </ligand>
</feature>
<feature type="binding site" evidence="1">
    <location>
        <position position="419"/>
    </location>
    <ligand>
        <name>Mg(2+)</name>
        <dbReference type="ChEBI" id="CHEBI:18420"/>
        <label>1</label>
    </ligand>
</feature>
<feature type="binding site" evidence="1">
    <location>
        <position position="419"/>
    </location>
    <ligand>
        <name>Mg(2+)</name>
        <dbReference type="ChEBI" id="CHEBI:18420"/>
        <label>2</label>
    </ligand>
</feature>
<sequence>MTDKSQAPEVDVNEQIAQRKAKLSALRDKGIAFPNDFRRDSLAADLHAEYDNLSKEELAEKGIRVKVAGRMMTRRIMGKASFATIQDMSGKIQLYVARDNLPEGYYNTEFKKWDLGDILGASGTLFITGTGELSVQVDEVRLLTKALRPLPDKFHGLSDQEMRYRQRYLDLITNEESRSTFMARSKIIDYIRRFLSDRQFLEVETPMMQAIPGGAAARPFSTHHNALDMELFLRIAPELYLKRLVVGGFEKVFEINRNFRNEGLSTRHNPEFTMLEFYWAYADYHDLMDLTEQMLRGAAESVLGSAQFTSQGVDYDFGKPFERMTVLEAIVKYMPEVSLEQLNDMNTATEIAEQVGVSVKPSWGLGKVQIEIFETVAEHRLIQPTFITAYPAEVSPLARRHDDNPFVTDRFEFFAGGRELANGFSELNDAEDQAERFREQVEQKEAGDDEAMFYDEDYVTALEHGMPPTAGQGIGIDRLVMLLTDSASIRDVLLFPHMRPKAD</sequence>
<keyword id="KW-0030">Aminoacyl-tRNA synthetase</keyword>
<keyword id="KW-0067">ATP-binding</keyword>
<keyword id="KW-0963">Cytoplasm</keyword>
<keyword id="KW-0436">Ligase</keyword>
<keyword id="KW-0460">Magnesium</keyword>
<keyword id="KW-0479">Metal-binding</keyword>
<keyword id="KW-0547">Nucleotide-binding</keyword>
<keyword id="KW-0648">Protein biosynthesis</keyword>
<keyword id="KW-1185">Reference proteome</keyword>
<reference key="1">
    <citation type="journal article" date="2004" name="Proc. Natl. Acad. Sci. U.S.A.">
        <title>Genome sequence of the deep-sea gamma-proteobacterium Idiomarina loihiensis reveals amino acid fermentation as a source of carbon and energy.</title>
        <authorList>
            <person name="Hou S."/>
            <person name="Saw J.H."/>
            <person name="Lee K.S."/>
            <person name="Freitas T.A."/>
            <person name="Belisle C."/>
            <person name="Kawarabayasi Y."/>
            <person name="Donachie S.P."/>
            <person name="Pikina A."/>
            <person name="Galperin M.Y."/>
            <person name="Koonin E.V."/>
            <person name="Makarova K.S."/>
            <person name="Omelchenko M.V."/>
            <person name="Sorokin A."/>
            <person name="Wolf Y.I."/>
            <person name="Li Q.X."/>
            <person name="Keum Y.S."/>
            <person name="Campbell S."/>
            <person name="Denery J."/>
            <person name="Aizawa S."/>
            <person name="Shibata S."/>
            <person name="Malahoff A."/>
            <person name="Alam M."/>
        </authorList>
    </citation>
    <scope>NUCLEOTIDE SEQUENCE [LARGE SCALE GENOMIC DNA]</scope>
    <source>
        <strain>ATCC BAA-735 / DSM 15497 / L2-TR</strain>
    </source>
</reference>
<protein>
    <recommendedName>
        <fullName evidence="1">Lysine--tRNA ligase</fullName>
        <ecNumber evidence="1">6.1.1.6</ecNumber>
    </recommendedName>
    <alternativeName>
        <fullName evidence="1">Lysyl-tRNA synthetase</fullName>
        <shortName evidence="1">LysRS</shortName>
    </alternativeName>
</protein>